<protein>
    <recommendedName>
        <fullName evidence="1">CTP synthase</fullName>
        <ecNumber evidence="1">6.3.4.2</ecNumber>
    </recommendedName>
    <alternativeName>
        <fullName evidence="1">Cytidine 5'-triphosphate synthase</fullName>
    </alternativeName>
    <alternativeName>
        <fullName evidence="1">Cytidine triphosphate synthetase</fullName>
        <shortName evidence="1">CTP synthetase</shortName>
        <shortName evidence="1">CTPS</shortName>
    </alternativeName>
    <alternativeName>
        <fullName evidence="1">UTP--ammonia ligase</fullName>
    </alternativeName>
</protein>
<gene>
    <name evidence="1" type="primary">pyrG</name>
    <name type="ordered locus">TWT_100</name>
</gene>
<sequence length="545" mass="60377">MNGIKHIFITGGVVSSIGKGLTAASLGSLLTMRGLKVFIKKLDPYLNVDPGTMNPLQHGEVFITEDGAETDLDVGHYERFLDVDLDRTANVTTGQVYSKVITLERTGRYLGETVQVIPHITDEIKRRIRLAPDDIDVIITEIGGTVGDIESQPFIEAARQIRREVGRENCCFIHVSLVPFLESAGEQKTKPTQHSVAILRAAGIQPDALVLRSDKPISSANQKKIALMCDVSAVVNAVTVPNIYEIPCVLNQHGLDKFVIKHLDLEAGEIDWSYWDDVLDAIENNRSEIEIAIIGKYTGLPDAYISVIEALRAGGFESKTKVNIKWVDSDDENLEDQLENINGACIPGGFGIRGIEGLIKAIRICREREIPTLGICLGMQCMVIEYARHVVGMHGASSTEFTDDTQWPVVTTMLEQRDILIDDQFGGTMRLGSYRAVLSIGSLAASLYGTTDIHERHRHRYEVNNGYAQRLVERGLIVSGRNTEQDLIEFIELDRKDHPFYIGTQAHPECKSRPKRPHPLFKGLVAAALARKEIAEFNSGKTVLQ</sequence>
<proteinExistence type="inferred from homology"/>
<organism>
    <name type="scientific">Tropheryma whipplei (strain Twist)</name>
    <name type="common">Whipple's bacillus</name>
    <dbReference type="NCBI Taxonomy" id="203267"/>
    <lineage>
        <taxon>Bacteria</taxon>
        <taxon>Bacillati</taxon>
        <taxon>Actinomycetota</taxon>
        <taxon>Actinomycetes</taxon>
        <taxon>Micrococcales</taxon>
        <taxon>Tropherymataceae</taxon>
        <taxon>Tropheryma</taxon>
    </lineage>
</organism>
<accession>Q83GX8</accession>
<dbReference type="EC" id="6.3.4.2" evidence="1"/>
<dbReference type="EMBL" id="AE014184">
    <property type="protein sequence ID" value="AAO44197.1"/>
    <property type="molecule type" value="Genomic_DNA"/>
</dbReference>
<dbReference type="RefSeq" id="WP_011102349.1">
    <property type="nucleotide sequence ID" value="NC_004572.3"/>
</dbReference>
<dbReference type="SMR" id="Q83GX8"/>
<dbReference type="STRING" id="203267.TWT_100"/>
<dbReference type="KEGG" id="twh:TWT_100"/>
<dbReference type="eggNOG" id="COG0504">
    <property type="taxonomic scope" value="Bacteria"/>
</dbReference>
<dbReference type="HOGENOM" id="CLU_011675_5_0_11"/>
<dbReference type="OrthoDB" id="9801107at2"/>
<dbReference type="UniPathway" id="UPA00159">
    <property type="reaction ID" value="UER00277"/>
</dbReference>
<dbReference type="Proteomes" id="UP000002200">
    <property type="component" value="Chromosome"/>
</dbReference>
<dbReference type="GO" id="GO:0005829">
    <property type="term" value="C:cytosol"/>
    <property type="evidence" value="ECO:0007669"/>
    <property type="project" value="TreeGrafter"/>
</dbReference>
<dbReference type="GO" id="GO:0005524">
    <property type="term" value="F:ATP binding"/>
    <property type="evidence" value="ECO:0007669"/>
    <property type="project" value="UniProtKB-KW"/>
</dbReference>
<dbReference type="GO" id="GO:0003883">
    <property type="term" value="F:CTP synthase activity"/>
    <property type="evidence" value="ECO:0007669"/>
    <property type="project" value="UniProtKB-UniRule"/>
</dbReference>
<dbReference type="GO" id="GO:0004359">
    <property type="term" value="F:glutaminase activity"/>
    <property type="evidence" value="ECO:0007669"/>
    <property type="project" value="RHEA"/>
</dbReference>
<dbReference type="GO" id="GO:0042802">
    <property type="term" value="F:identical protein binding"/>
    <property type="evidence" value="ECO:0007669"/>
    <property type="project" value="TreeGrafter"/>
</dbReference>
<dbReference type="GO" id="GO:0046872">
    <property type="term" value="F:metal ion binding"/>
    <property type="evidence" value="ECO:0007669"/>
    <property type="project" value="UniProtKB-KW"/>
</dbReference>
<dbReference type="GO" id="GO:0044210">
    <property type="term" value="P:'de novo' CTP biosynthetic process"/>
    <property type="evidence" value="ECO:0007669"/>
    <property type="project" value="UniProtKB-UniRule"/>
</dbReference>
<dbReference type="GO" id="GO:0019856">
    <property type="term" value="P:pyrimidine nucleobase biosynthetic process"/>
    <property type="evidence" value="ECO:0007669"/>
    <property type="project" value="TreeGrafter"/>
</dbReference>
<dbReference type="CDD" id="cd03113">
    <property type="entry name" value="CTPS_N"/>
    <property type="match status" value="1"/>
</dbReference>
<dbReference type="CDD" id="cd01746">
    <property type="entry name" value="GATase1_CTP_Synthase"/>
    <property type="match status" value="1"/>
</dbReference>
<dbReference type="FunFam" id="3.40.50.300:FF:000009">
    <property type="entry name" value="CTP synthase"/>
    <property type="match status" value="1"/>
</dbReference>
<dbReference type="FunFam" id="3.40.50.880:FF:000002">
    <property type="entry name" value="CTP synthase"/>
    <property type="match status" value="1"/>
</dbReference>
<dbReference type="Gene3D" id="3.40.50.880">
    <property type="match status" value="1"/>
</dbReference>
<dbReference type="Gene3D" id="3.40.50.300">
    <property type="entry name" value="P-loop containing nucleotide triphosphate hydrolases"/>
    <property type="match status" value="1"/>
</dbReference>
<dbReference type="HAMAP" id="MF_01227">
    <property type="entry name" value="PyrG"/>
    <property type="match status" value="1"/>
</dbReference>
<dbReference type="InterPro" id="IPR029062">
    <property type="entry name" value="Class_I_gatase-like"/>
</dbReference>
<dbReference type="InterPro" id="IPR004468">
    <property type="entry name" value="CTP_synthase"/>
</dbReference>
<dbReference type="InterPro" id="IPR017456">
    <property type="entry name" value="CTP_synthase_N"/>
</dbReference>
<dbReference type="InterPro" id="IPR017926">
    <property type="entry name" value="GATASE"/>
</dbReference>
<dbReference type="InterPro" id="IPR033828">
    <property type="entry name" value="GATase1_CTP_Synthase"/>
</dbReference>
<dbReference type="InterPro" id="IPR027417">
    <property type="entry name" value="P-loop_NTPase"/>
</dbReference>
<dbReference type="NCBIfam" id="NF003792">
    <property type="entry name" value="PRK05380.1"/>
    <property type="match status" value="1"/>
</dbReference>
<dbReference type="NCBIfam" id="TIGR00337">
    <property type="entry name" value="PyrG"/>
    <property type="match status" value="1"/>
</dbReference>
<dbReference type="PANTHER" id="PTHR11550">
    <property type="entry name" value="CTP SYNTHASE"/>
    <property type="match status" value="1"/>
</dbReference>
<dbReference type="PANTHER" id="PTHR11550:SF0">
    <property type="entry name" value="CTP SYNTHASE-RELATED"/>
    <property type="match status" value="1"/>
</dbReference>
<dbReference type="Pfam" id="PF06418">
    <property type="entry name" value="CTP_synth_N"/>
    <property type="match status" value="1"/>
</dbReference>
<dbReference type="Pfam" id="PF00117">
    <property type="entry name" value="GATase"/>
    <property type="match status" value="1"/>
</dbReference>
<dbReference type="SUPFAM" id="SSF52317">
    <property type="entry name" value="Class I glutamine amidotransferase-like"/>
    <property type="match status" value="1"/>
</dbReference>
<dbReference type="SUPFAM" id="SSF52540">
    <property type="entry name" value="P-loop containing nucleoside triphosphate hydrolases"/>
    <property type="match status" value="1"/>
</dbReference>
<dbReference type="PROSITE" id="PS51273">
    <property type="entry name" value="GATASE_TYPE_1"/>
    <property type="match status" value="1"/>
</dbReference>
<evidence type="ECO:0000255" key="1">
    <source>
        <dbReference type="HAMAP-Rule" id="MF_01227"/>
    </source>
</evidence>
<name>PYRG_TROWT</name>
<reference key="1">
    <citation type="journal article" date="2003" name="Genome Res.">
        <title>Tropheryma whipplei twist: a human pathogenic Actinobacteria with a reduced genome.</title>
        <authorList>
            <person name="Raoult D."/>
            <person name="Ogata H."/>
            <person name="Audic S."/>
            <person name="Robert C."/>
            <person name="Suhre K."/>
            <person name="Drancourt M."/>
            <person name="Claverie J.-M."/>
        </authorList>
    </citation>
    <scope>NUCLEOTIDE SEQUENCE [LARGE SCALE GENOMIC DNA]</scope>
    <source>
        <strain>Twist</strain>
    </source>
</reference>
<keyword id="KW-0067">ATP-binding</keyword>
<keyword id="KW-0315">Glutamine amidotransferase</keyword>
<keyword id="KW-0436">Ligase</keyword>
<keyword id="KW-0460">Magnesium</keyword>
<keyword id="KW-0479">Metal-binding</keyword>
<keyword id="KW-0547">Nucleotide-binding</keyword>
<keyword id="KW-0665">Pyrimidine biosynthesis</keyword>
<keyword id="KW-1185">Reference proteome</keyword>
<feature type="chain" id="PRO_0000266258" description="CTP synthase">
    <location>
        <begin position="1"/>
        <end position="545"/>
    </location>
</feature>
<feature type="domain" description="Glutamine amidotransferase type-1" evidence="1">
    <location>
        <begin position="290"/>
        <end position="534"/>
    </location>
</feature>
<feature type="region of interest" description="Amidoligase domain" evidence="1">
    <location>
        <begin position="1"/>
        <end position="265"/>
    </location>
</feature>
<feature type="active site" description="Nucleophile; for glutamine hydrolysis" evidence="1">
    <location>
        <position position="376"/>
    </location>
</feature>
<feature type="active site" evidence="1">
    <location>
        <position position="507"/>
    </location>
</feature>
<feature type="active site" evidence="1">
    <location>
        <position position="509"/>
    </location>
</feature>
<feature type="binding site" evidence="1">
    <location>
        <position position="15"/>
    </location>
    <ligand>
        <name>CTP</name>
        <dbReference type="ChEBI" id="CHEBI:37563"/>
        <note>allosteric inhibitor</note>
    </ligand>
</feature>
<feature type="binding site" evidence="1">
    <location>
        <position position="15"/>
    </location>
    <ligand>
        <name>UTP</name>
        <dbReference type="ChEBI" id="CHEBI:46398"/>
    </ligand>
</feature>
<feature type="binding site" evidence="1">
    <location>
        <begin position="16"/>
        <end position="21"/>
    </location>
    <ligand>
        <name>ATP</name>
        <dbReference type="ChEBI" id="CHEBI:30616"/>
    </ligand>
</feature>
<feature type="binding site" evidence="1">
    <location>
        <position position="73"/>
    </location>
    <ligand>
        <name>ATP</name>
        <dbReference type="ChEBI" id="CHEBI:30616"/>
    </ligand>
</feature>
<feature type="binding site" evidence="1">
    <location>
        <position position="73"/>
    </location>
    <ligand>
        <name>Mg(2+)</name>
        <dbReference type="ChEBI" id="CHEBI:18420"/>
    </ligand>
</feature>
<feature type="binding site" evidence="1">
    <location>
        <position position="141"/>
    </location>
    <ligand>
        <name>Mg(2+)</name>
        <dbReference type="ChEBI" id="CHEBI:18420"/>
    </ligand>
</feature>
<feature type="binding site" evidence="1">
    <location>
        <begin position="148"/>
        <end position="150"/>
    </location>
    <ligand>
        <name>CTP</name>
        <dbReference type="ChEBI" id="CHEBI:37563"/>
        <note>allosteric inhibitor</note>
    </ligand>
</feature>
<feature type="binding site" evidence="1">
    <location>
        <begin position="188"/>
        <end position="193"/>
    </location>
    <ligand>
        <name>CTP</name>
        <dbReference type="ChEBI" id="CHEBI:37563"/>
        <note>allosteric inhibitor</note>
    </ligand>
</feature>
<feature type="binding site" evidence="1">
    <location>
        <begin position="188"/>
        <end position="193"/>
    </location>
    <ligand>
        <name>UTP</name>
        <dbReference type="ChEBI" id="CHEBI:46398"/>
    </ligand>
</feature>
<feature type="binding site" evidence="1">
    <location>
        <position position="224"/>
    </location>
    <ligand>
        <name>CTP</name>
        <dbReference type="ChEBI" id="CHEBI:37563"/>
        <note>allosteric inhibitor</note>
    </ligand>
</feature>
<feature type="binding site" evidence="1">
    <location>
        <position position="224"/>
    </location>
    <ligand>
        <name>UTP</name>
        <dbReference type="ChEBI" id="CHEBI:46398"/>
    </ligand>
</feature>
<feature type="binding site" evidence="1">
    <location>
        <position position="349"/>
    </location>
    <ligand>
        <name>L-glutamine</name>
        <dbReference type="ChEBI" id="CHEBI:58359"/>
    </ligand>
</feature>
<feature type="binding site" evidence="1">
    <location>
        <begin position="377"/>
        <end position="380"/>
    </location>
    <ligand>
        <name>L-glutamine</name>
        <dbReference type="ChEBI" id="CHEBI:58359"/>
    </ligand>
</feature>
<feature type="binding site" evidence="1">
    <location>
        <position position="400"/>
    </location>
    <ligand>
        <name>L-glutamine</name>
        <dbReference type="ChEBI" id="CHEBI:58359"/>
    </ligand>
</feature>
<feature type="binding site" evidence="1">
    <location>
        <position position="460"/>
    </location>
    <ligand>
        <name>L-glutamine</name>
        <dbReference type="ChEBI" id="CHEBI:58359"/>
    </ligand>
</feature>
<comment type="function">
    <text evidence="1">Catalyzes the ATP-dependent amination of UTP to CTP with either L-glutamine or ammonia as the source of nitrogen. Regulates intracellular CTP levels through interactions with the four ribonucleotide triphosphates.</text>
</comment>
<comment type="catalytic activity">
    <reaction evidence="1">
        <text>UTP + L-glutamine + ATP + H2O = CTP + L-glutamate + ADP + phosphate + 2 H(+)</text>
        <dbReference type="Rhea" id="RHEA:26426"/>
        <dbReference type="ChEBI" id="CHEBI:15377"/>
        <dbReference type="ChEBI" id="CHEBI:15378"/>
        <dbReference type="ChEBI" id="CHEBI:29985"/>
        <dbReference type="ChEBI" id="CHEBI:30616"/>
        <dbReference type="ChEBI" id="CHEBI:37563"/>
        <dbReference type="ChEBI" id="CHEBI:43474"/>
        <dbReference type="ChEBI" id="CHEBI:46398"/>
        <dbReference type="ChEBI" id="CHEBI:58359"/>
        <dbReference type="ChEBI" id="CHEBI:456216"/>
        <dbReference type="EC" id="6.3.4.2"/>
    </reaction>
</comment>
<comment type="catalytic activity">
    <reaction evidence="1">
        <text>L-glutamine + H2O = L-glutamate + NH4(+)</text>
        <dbReference type="Rhea" id="RHEA:15889"/>
        <dbReference type="ChEBI" id="CHEBI:15377"/>
        <dbReference type="ChEBI" id="CHEBI:28938"/>
        <dbReference type="ChEBI" id="CHEBI:29985"/>
        <dbReference type="ChEBI" id="CHEBI:58359"/>
    </reaction>
</comment>
<comment type="catalytic activity">
    <reaction evidence="1">
        <text>UTP + NH4(+) + ATP = CTP + ADP + phosphate + 2 H(+)</text>
        <dbReference type="Rhea" id="RHEA:16597"/>
        <dbReference type="ChEBI" id="CHEBI:15378"/>
        <dbReference type="ChEBI" id="CHEBI:28938"/>
        <dbReference type="ChEBI" id="CHEBI:30616"/>
        <dbReference type="ChEBI" id="CHEBI:37563"/>
        <dbReference type="ChEBI" id="CHEBI:43474"/>
        <dbReference type="ChEBI" id="CHEBI:46398"/>
        <dbReference type="ChEBI" id="CHEBI:456216"/>
    </reaction>
</comment>
<comment type="activity regulation">
    <text evidence="1">Allosterically activated by GTP, when glutamine is the substrate; GTP has no effect on the reaction when ammonia is the substrate. The allosteric effector GTP functions by stabilizing the protein conformation that binds the tetrahedral intermediate(s) formed during glutamine hydrolysis. Inhibited by the product CTP, via allosteric rather than competitive inhibition.</text>
</comment>
<comment type="pathway">
    <text evidence="1">Pyrimidine metabolism; CTP biosynthesis via de novo pathway; CTP from UDP: step 2/2.</text>
</comment>
<comment type="subunit">
    <text evidence="1">Homotetramer.</text>
</comment>
<comment type="miscellaneous">
    <text evidence="1">CTPSs have evolved a hybrid strategy for distinguishing between UTP and CTP. The overlapping regions of the product feedback inhibitory and substrate sites recognize a common feature in both compounds, the triphosphate moiety. To differentiate isosteric substrate and product pyrimidine rings, an additional pocket far from the expected kinase/ligase catalytic site, specifically recognizes the cytosine and ribose portions of the product inhibitor.</text>
</comment>
<comment type="similarity">
    <text evidence="1">Belongs to the CTP synthase family.</text>
</comment>